<proteinExistence type="evidence at transcript level"/>
<sequence length="319" mass="34753">MPREDRATWKSNYFLKIIQLLDDFPKCFIVGADNVGSKQMQTIRLSLRGKAVVLMGKNTMMRKAIRGHLENNPALERLLPHIRGNVGFVFTKEDLTEVRDLLLANKVPAAARAGAIAPCEVTVPAQNTGLGPEKTSFFQALGITTKISRGTIEILSDVQLIKPGDKVGASEATLLNMLNMLNISPFSYGLIIQQVYDNGSVYSPEVLDITEDALHKRFLKGVRNIASVCLQIGYPTLASIPHTIINGYKRVLAVTVETDYTFPLAEKVKAYLADPTAFAVAAPVAAATEQKSAAPAAKEEAPKEDSEESDEDMGFGLFD</sequence>
<evidence type="ECO:0000250" key="1"/>
<evidence type="ECO:0000250" key="2">
    <source>
        <dbReference type="UniProtKB" id="P05388"/>
    </source>
</evidence>
<evidence type="ECO:0000256" key="3">
    <source>
        <dbReference type="SAM" id="MobiDB-lite"/>
    </source>
</evidence>
<evidence type="ECO:0000305" key="4"/>
<keyword id="KW-0963">Cytoplasm</keyword>
<keyword id="KW-0539">Nucleus</keyword>
<keyword id="KW-0597">Phosphoprotein</keyword>
<keyword id="KW-1185">Reference proteome</keyword>
<keyword id="KW-0687">Ribonucleoprotein</keyword>
<keyword id="KW-0689">Ribosomal protein</keyword>
<gene>
    <name type="primary">rplp0</name>
    <name type="synonym">arp</name>
</gene>
<name>RLA0_DANRE</name>
<dbReference type="EMBL" id="AF134852">
    <property type="protein sequence ID" value="AAD54776.1"/>
    <property type="molecule type" value="mRNA"/>
</dbReference>
<dbReference type="SMR" id="Q9PV90"/>
<dbReference type="FunCoup" id="Q9PV90">
    <property type="interactions" value="2654"/>
</dbReference>
<dbReference type="STRING" id="7955.ENSDARP00000067953"/>
<dbReference type="PaxDb" id="7955-ENSDARP00000067953"/>
<dbReference type="AGR" id="ZFIN:ZDB-GENE-000629-1"/>
<dbReference type="ZFIN" id="ZDB-GENE-000629-1">
    <property type="gene designation" value="rplp0"/>
</dbReference>
<dbReference type="eggNOG" id="KOG0815">
    <property type="taxonomic scope" value="Eukaryota"/>
</dbReference>
<dbReference type="InParanoid" id="Q9PV90"/>
<dbReference type="PhylomeDB" id="Q9PV90"/>
<dbReference type="Reactome" id="R-DRE-156827">
    <property type="pathway name" value="L13a-mediated translational silencing of Ceruloplasmin expression"/>
</dbReference>
<dbReference type="Reactome" id="R-DRE-1799339">
    <property type="pathway name" value="SRP-dependent cotranslational protein targeting to membrane"/>
</dbReference>
<dbReference type="Reactome" id="R-DRE-72689">
    <property type="pathway name" value="Formation of a pool of free 40S subunits"/>
</dbReference>
<dbReference type="Reactome" id="R-DRE-975956">
    <property type="pathway name" value="Nonsense Mediated Decay (NMD) independent of the Exon Junction Complex (EJC)"/>
</dbReference>
<dbReference type="Reactome" id="R-DRE-975957">
    <property type="pathway name" value="Nonsense Mediated Decay (NMD) enhanced by the Exon Junction Complex (EJC)"/>
</dbReference>
<dbReference type="PRO" id="PR:Q9PV90"/>
<dbReference type="Proteomes" id="UP000000437">
    <property type="component" value="Unplaced"/>
</dbReference>
<dbReference type="GO" id="GO:0022625">
    <property type="term" value="C:cytosolic large ribosomal subunit"/>
    <property type="evidence" value="ECO:0000318"/>
    <property type="project" value="GO_Central"/>
</dbReference>
<dbReference type="GO" id="GO:0005634">
    <property type="term" value="C:nucleus"/>
    <property type="evidence" value="ECO:0007669"/>
    <property type="project" value="UniProtKB-SubCell"/>
</dbReference>
<dbReference type="GO" id="GO:0070180">
    <property type="term" value="F:large ribosomal subunit rRNA binding"/>
    <property type="evidence" value="ECO:0000318"/>
    <property type="project" value="GO_Central"/>
</dbReference>
<dbReference type="GO" id="GO:0003735">
    <property type="term" value="F:structural constituent of ribosome"/>
    <property type="evidence" value="ECO:0000318"/>
    <property type="project" value="GO_Central"/>
</dbReference>
<dbReference type="GO" id="GO:0043009">
    <property type="term" value="P:chordate embryonic development"/>
    <property type="evidence" value="ECO:0000315"/>
    <property type="project" value="ZFIN"/>
</dbReference>
<dbReference type="GO" id="GO:0002181">
    <property type="term" value="P:cytoplasmic translation"/>
    <property type="evidence" value="ECO:0000318"/>
    <property type="project" value="GO_Central"/>
</dbReference>
<dbReference type="GO" id="GO:0042254">
    <property type="term" value="P:ribosome biogenesis"/>
    <property type="evidence" value="ECO:0007669"/>
    <property type="project" value="InterPro"/>
</dbReference>
<dbReference type="CDD" id="cd05795">
    <property type="entry name" value="Ribosomal_P0_L10e"/>
    <property type="match status" value="1"/>
</dbReference>
<dbReference type="FunFam" id="3.30.70.1730:FF:000002">
    <property type="entry name" value="60S acidic ribosomal protein P0"/>
    <property type="match status" value="1"/>
</dbReference>
<dbReference type="FunFam" id="3.90.105.20:FF:000001">
    <property type="entry name" value="60S acidic ribosomal protein P0"/>
    <property type="match status" value="1"/>
</dbReference>
<dbReference type="Gene3D" id="3.30.70.1730">
    <property type="match status" value="1"/>
</dbReference>
<dbReference type="Gene3D" id="3.90.105.20">
    <property type="match status" value="1"/>
</dbReference>
<dbReference type="InterPro" id="IPR050323">
    <property type="entry name" value="Ribosomal_protein_uL10"/>
</dbReference>
<dbReference type="InterPro" id="IPR001790">
    <property type="entry name" value="Ribosomal_uL10"/>
</dbReference>
<dbReference type="InterPro" id="IPR040637">
    <property type="entry name" value="Ribosomal_uL10-like_insert"/>
</dbReference>
<dbReference type="InterPro" id="IPR043164">
    <property type="entry name" value="Ribosomal_uL10-like_insert_sf"/>
</dbReference>
<dbReference type="InterPro" id="IPR043141">
    <property type="entry name" value="Ribosomal_uL10-like_sf"/>
</dbReference>
<dbReference type="InterPro" id="IPR030670">
    <property type="entry name" value="uL10_eukaryotes"/>
</dbReference>
<dbReference type="PANTHER" id="PTHR45699">
    <property type="entry name" value="60S ACIDIC RIBOSOMAL PROTEIN P0"/>
    <property type="match status" value="1"/>
</dbReference>
<dbReference type="PANTHER" id="PTHR45699:SF3">
    <property type="entry name" value="LARGE RIBOSOMAL SUBUNIT PROTEIN UL10"/>
    <property type="match status" value="1"/>
</dbReference>
<dbReference type="Pfam" id="PF00428">
    <property type="entry name" value="Ribosomal_60s"/>
    <property type="match status" value="1"/>
</dbReference>
<dbReference type="Pfam" id="PF00466">
    <property type="entry name" value="Ribosomal_L10"/>
    <property type="match status" value="1"/>
</dbReference>
<dbReference type="Pfam" id="PF17777">
    <property type="entry name" value="RL10P_insert"/>
    <property type="match status" value="1"/>
</dbReference>
<dbReference type="PIRSF" id="PIRSF039087">
    <property type="entry name" value="L10E"/>
    <property type="match status" value="1"/>
</dbReference>
<dbReference type="SUPFAM" id="SSF160369">
    <property type="entry name" value="Ribosomal protein L10-like"/>
    <property type="match status" value="1"/>
</dbReference>
<comment type="function">
    <text>Ribosomal protein P0 is the functional equivalent of E.coli protein L10.</text>
</comment>
<comment type="subunit">
    <text evidence="1">P0 forms a pentameric complex by interaction with dimers of P1 and P2.</text>
</comment>
<comment type="subcellular location">
    <subcellularLocation>
        <location evidence="2">Nucleus</location>
    </subcellularLocation>
    <subcellularLocation>
        <location evidence="2">Cytoplasm</location>
    </subcellularLocation>
</comment>
<comment type="PTM">
    <text evidence="1">Phosphorylated.</text>
</comment>
<comment type="similarity">
    <text evidence="4">Belongs to the universal ribosomal protein uL10 family.</text>
</comment>
<feature type="chain" id="PRO_0000154763" description="Large ribosomal subunit protein uL10">
    <location>
        <begin position="1"/>
        <end position="319"/>
    </location>
</feature>
<feature type="region of interest" description="Disordered" evidence="3">
    <location>
        <begin position="289"/>
        <end position="319"/>
    </location>
</feature>
<protein>
    <recommendedName>
        <fullName evidence="4">Large ribosomal subunit protein uL10</fullName>
    </recommendedName>
    <alternativeName>
        <fullName>60S acidic ribosomal protein P0</fullName>
    </alternativeName>
    <alternativeName>
        <fullName>60S ribosomal protein L10E</fullName>
    </alternativeName>
</protein>
<organism>
    <name type="scientific">Danio rerio</name>
    <name type="common">Zebrafish</name>
    <name type="synonym">Brachydanio rerio</name>
    <dbReference type="NCBI Taxonomy" id="7955"/>
    <lineage>
        <taxon>Eukaryota</taxon>
        <taxon>Metazoa</taxon>
        <taxon>Chordata</taxon>
        <taxon>Craniata</taxon>
        <taxon>Vertebrata</taxon>
        <taxon>Euteleostomi</taxon>
        <taxon>Actinopterygii</taxon>
        <taxon>Neopterygii</taxon>
        <taxon>Teleostei</taxon>
        <taxon>Ostariophysi</taxon>
        <taxon>Cypriniformes</taxon>
        <taxon>Danionidae</taxon>
        <taxon>Danioninae</taxon>
        <taxon>Danio</taxon>
    </lineage>
</organism>
<accession>Q9PV90</accession>
<reference key="1">
    <citation type="journal article" date="1999" name="Dev. Genet.">
        <title>Faithful expression of green fluorescent protein (GFP) in transgenic zebrafish embryos under control of zebrafish gene promoters.</title>
        <authorList>
            <person name="Ju B."/>
            <person name="Xu Y."/>
            <person name="He J."/>
            <person name="Liao J."/>
            <person name="Yan T."/>
            <person name="Hew C.-L."/>
            <person name="Lam T.J."/>
            <person name="Gong Z."/>
        </authorList>
    </citation>
    <scope>NUCLEOTIDE SEQUENCE [MRNA]</scope>
</reference>